<proteinExistence type="inferred from homology"/>
<accession>C1DBG1</accession>
<protein>
    <recommendedName>
        <fullName evidence="1">Large ribosomal subunit protein bL19</fullName>
    </recommendedName>
    <alternativeName>
        <fullName evidence="2">50S ribosomal protein L19</fullName>
    </alternativeName>
</protein>
<gene>
    <name evidence="1" type="primary">rplS</name>
    <name type="ordered locus">LHK_00363</name>
</gene>
<organism>
    <name type="scientific">Laribacter hongkongensis (strain HLHK9)</name>
    <dbReference type="NCBI Taxonomy" id="557598"/>
    <lineage>
        <taxon>Bacteria</taxon>
        <taxon>Pseudomonadati</taxon>
        <taxon>Pseudomonadota</taxon>
        <taxon>Betaproteobacteria</taxon>
        <taxon>Neisseriales</taxon>
        <taxon>Aquaspirillaceae</taxon>
        <taxon>Laribacter</taxon>
    </lineage>
</organism>
<keyword id="KW-1185">Reference proteome</keyword>
<keyword id="KW-0687">Ribonucleoprotein</keyword>
<keyword id="KW-0689">Ribosomal protein</keyword>
<feature type="chain" id="PRO_1000193857" description="Large ribosomal subunit protein bL19">
    <location>
        <begin position="1"/>
        <end position="123"/>
    </location>
</feature>
<name>RL19_LARHH</name>
<reference key="1">
    <citation type="journal article" date="2009" name="PLoS Genet.">
        <title>The complete genome and proteome of Laribacter hongkongensis reveal potential mechanisms for adaptations to different temperatures and habitats.</title>
        <authorList>
            <person name="Woo P.C.Y."/>
            <person name="Lau S.K.P."/>
            <person name="Tse H."/>
            <person name="Teng J.L.L."/>
            <person name="Curreem S.O."/>
            <person name="Tsang A.K.L."/>
            <person name="Fan R.Y.Y."/>
            <person name="Wong G.K.M."/>
            <person name="Huang Y."/>
            <person name="Loman N.J."/>
            <person name="Snyder L.A.S."/>
            <person name="Cai J.J."/>
            <person name="Huang J.-D."/>
            <person name="Mak W."/>
            <person name="Pallen M.J."/>
            <person name="Lok S."/>
            <person name="Yuen K.-Y."/>
        </authorList>
    </citation>
    <scope>NUCLEOTIDE SEQUENCE [LARGE SCALE GENOMIC DNA]</scope>
    <source>
        <strain>HLHK9</strain>
    </source>
</reference>
<comment type="function">
    <text evidence="1">This protein is located at the 30S-50S ribosomal subunit interface and may play a role in the structure and function of the aminoacyl-tRNA binding site.</text>
</comment>
<comment type="similarity">
    <text evidence="1">Belongs to the bacterial ribosomal protein bL19 family.</text>
</comment>
<sequence length="123" mass="13940">MNLIQQLEQEEIARLGKTIPEFAPGDTVVVQVKVKEGNRERLQAFEGVVIAKRNRGLNSSFIVRKISSGEGVERTFQAYSPLVASIEVKRRGDVRRAKLYYLRERSGKSARIKEKLVRKVKAA</sequence>
<evidence type="ECO:0000255" key="1">
    <source>
        <dbReference type="HAMAP-Rule" id="MF_00402"/>
    </source>
</evidence>
<evidence type="ECO:0000305" key="2"/>
<dbReference type="EMBL" id="CP001154">
    <property type="protein sequence ID" value="ACO73358.1"/>
    <property type="molecule type" value="Genomic_DNA"/>
</dbReference>
<dbReference type="RefSeq" id="WP_012695852.1">
    <property type="nucleotide sequence ID" value="NC_012559.1"/>
</dbReference>
<dbReference type="SMR" id="C1DBG1"/>
<dbReference type="STRING" id="557598.LHK_00363"/>
<dbReference type="GeneID" id="75109416"/>
<dbReference type="KEGG" id="lhk:LHK_00363"/>
<dbReference type="eggNOG" id="COG0335">
    <property type="taxonomic scope" value="Bacteria"/>
</dbReference>
<dbReference type="HOGENOM" id="CLU_103507_1_0_4"/>
<dbReference type="Proteomes" id="UP000002010">
    <property type="component" value="Chromosome"/>
</dbReference>
<dbReference type="GO" id="GO:0022625">
    <property type="term" value="C:cytosolic large ribosomal subunit"/>
    <property type="evidence" value="ECO:0007669"/>
    <property type="project" value="TreeGrafter"/>
</dbReference>
<dbReference type="GO" id="GO:0003735">
    <property type="term" value="F:structural constituent of ribosome"/>
    <property type="evidence" value="ECO:0007669"/>
    <property type="project" value="InterPro"/>
</dbReference>
<dbReference type="GO" id="GO:0006412">
    <property type="term" value="P:translation"/>
    <property type="evidence" value="ECO:0007669"/>
    <property type="project" value="UniProtKB-UniRule"/>
</dbReference>
<dbReference type="FunFam" id="2.30.30.790:FF:000001">
    <property type="entry name" value="50S ribosomal protein L19"/>
    <property type="match status" value="1"/>
</dbReference>
<dbReference type="Gene3D" id="2.30.30.790">
    <property type="match status" value="1"/>
</dbReference>
<dbReference type="HAMAP" id="MF_00402">
    <property type="entry name" value="Ribosomal_bL19"/>
    <property type="match status" value="1"/>
</dbReference>
<dbReference type="InterPro" id="IPR001857">
    <property type="entry name" value="Ribosomal_bL19"/>
</dbReference>
<dbReference type="InterPro" id="IPR018257">
    <property type="entry name" value="Ribosomal_bL19_CS"/>
</dbReference>
<dbReference type="InterPro" id="IPR038657">
    <property type="entry name" value="Ribosomal_bL19_sf"/>
</dbReference>
<dbReference type="InterPro" id="IPR008991">
    <property type="entry name" value="Translation_prot_SH3-like_sf"/>
</dbReference>
<dbReference type="NCBIfam" id="TIGR01024">
    <property type="entry name" value="rplS_bact"/>
    <property type="match status" value="1"/>
</dbReference>
<dbReference type="PANTHER" id="PTHR15680:SF9">
    <property type="entry name" value="LARGE RIBOSOMAL SUBUNIT PROTEIN BL19M"/>
    <property type="match status" value="1"/>
</dbReference>
<dbReference type="PANTHER" id="PTHR15680">
    <property type="entry name" value="RIBOSOMAL PROTEIN L19"/>
    <property type="match status" value="1"/>
</dbReference>
<dbReference type="Pfam" id="PF01245">
    <property type="entry name" value="Ribosomal_L19"/>
    <property type="match status" value="1"/>
</dbReference>
<dbReference type="PIRSF" id="PIRSF002191">
    <property type="entry name" value="Ribosomal_L19"/>
    <property type="match status" value="1"/>
</dbReference>
<dbReference type="PRINTS" id="PR00061">
    <property type="entry name" value="RIBOSOMALL19"/>
</dbReference>
<dbReference type="SUPFAM" id="SSF50104">
    <property type="entry name" value="Translation proteins SH3-like domain"/>
    <property type="match status" value="1"/>
</dbReference>
<dbReference type="PROSITE" id="PS01015">
    <property type="entry name" value="RIBOSOMAL_L19"/>
    <property type="match status" value="1"/>
</dbReference>